<organism>
    <name type="scientific">Legionella pneumophila (strain Corby)</name>
    <dbReference type="NCBI Taxonomy" id="400673"/>
    <lineage>
        <taxon>Bacteria</taxon>
        <taxon>Pseudomonadati</taxon>
        <taxon>Pseudomonadota</taxon>
        <taxon>Gammaproteobacteria</taxon>
        <taxon>Legionellales</taxon>
        <taxon>Legionellaceae</taxon>
        <taxon>Legionella</taxon>
    </lineage>
</organism>
<dbReference type="EMBL" id="CP000675">
    <property type="protein sequence ID" value="ABQ55110.1"/>
    <property type="molecule type" value="Genomic_DNA"/>
</dbReference>
<dbReference type="RefSeq" id="WP_011213985.1">
    <property type="nucleotide sequence ID" value="NZ_JAPMSS010000002.1"/>
</dbReference>
<dbReference type="SMR" id="A5ICL0"/>
<dbReference type="KEGG" id="lpc:LPC_1143"/>
<dbReference type="HOGENOM" id="CLU_040318_1_2_6"/>
<dbReference type="GO" id="GO:0022627">
    <property type="term" value="C:cytosolic small ribosomal subunit"/>
    <property type="evidence" value="ECO:0007669"/>
    <property type="project" value="TreeGrafter"/>
</dbReference>
<dbReference type="GO" id="GO:0003735">
    <property type="term" value="F:structural constituent of ribosome"/>
    <property type="evidence" value="ECO:0007669"/>
    <property type="project" value="InterPro"/>
</dbReference>
<dbReference type="GO" id="GO:0006412">
    <property type="term" value="P:translation"/>
    <property type="evidence" value="ECO:0007669"/>
    <property type="project" value="UniProtKB-UniRule"/>
</dbReference>
<dbReference type="CDD" id="cd01425">
    <property type="entry name" value="RPS2"/>
    <property type="match status" value="1"/>
</dbReference>
<dbReference type="FunFam" id="1.10.287.610:FF:000001">
    <property type="entry name" value="30S ribosomal protein S2"/>
    <property type="match status" value="1"/>
</dbReference>
<dbReference type="Gene3D" id="3.40.50.10490">
    <property type="entry name" value="Glucose-6-phosphate isomerase like protein, domain 1"/>
    <property type="match status" value="1"/>
</dbReference>
<dbReference type="Gene3D" id="1.10.287.610">
    <property type="entry name" value="Helix hairpin bin"/>
    <property type="match status" value="1"/>
</dbReference>
<dbReference type="HAMAP" id="MF_00291_B">
    <property type="entry name" value="Ribosomal_uS2_B"/>
    <property type="match status" value="1"/>
</dbReference>
<dbReference type="InterPro" id="IPR001865">
    <property type="entry name" value="Ribosomal_uS2"/>
</dbReference>
<dbReference type="InterPro" id="IPR005706">
    <property type="entry name" value="Ribosomal_uS2_bac/mit/plastid"/>
</dbReference>
<dbReference type="InterPro" id="IPR018130">
    <property type="entry name" value="Ribosomal_uS2_CS"/>
</dbReference>
<dbReference type="InterPro" id="IPR023591">
    <property type="entry name" value="Ribosomal_uS2_flav_dom_sf"/>
</dbReference>
<dbReference type="NCBIfam" id="TIGR01011">
    <property type="entry name" value="rpsB_bact"/>
    <property type="match status" value="1"/>
</dbReference>
<dbReference type="PANTHER" id="PTHR12534">
    <property type="entry name" value="30S RIBOSOMAL PROTEIN S2 PROKARYOTIC AND ORGANELLAR"/>
    <property type="match status" value="1"/>
</dbReference>
<dbReference type="PANTHER" id="PTHR12534:SF0">
    <property type="entry name" value="SMALL RIBOSOMAL SUBUNIT PROTEIN US2M"/>
    <property type="match status" value="1"/>
</dbReference>
<dbReference type="Pfam" id="PF00318">
    <property type="entry name" value="Ribosomal_S2"/>
    <property type="match status" value="1"/>
</dbReference>
<dbReference type="PRINTS" id="PR00395">
    <property type="entry name" value="RIBOSOMALS2"/>
</dbReference>
<dbReference type="SUPFAM" id="SSF52313">
    <property type="entry name" value="Ribosomal protein S2"/>
    <property type="match status" value="1"/>
</dbReference>
<dbReference type="PROSITE" id="PS00962">
    <property type="entry name" value="RIBOSOMAL_S2_1"/>
    <property type="match status" value="1"/>
</dbReference>
<dbReference type="PROSITE" id="PS00963">
    <property type="entry name" value="RIBOSOMAL_S2_2"/>
    <property type="match status" value="1"/>
</dbReference>
<accession>A5ICL0</accession>
<keyword id="KW-0687">Ribonucleoprotein</keyword>
<keyword id="KW-0689">Ribosomal protein</keyword>
<name>RS2_LEGPC</name>
<evidence type="ECO:0000255" key="1">
    <source>
        <dbReference type="HAMAP-Rule" id="MF_00291"/>
    </source>
</evidence>
<evidence type="ECO:0000305" key="2"/>
<gene>
    <name evidence="1" type="primary">rpsB</name>
    <name type="ordered locus">LPC_1143</name>
</gene>
<protein>
    <recommendedName>
        <fullName evidence="1">Small ribosomal subunit protein uS2</fullName>
    </recommendedName>
    <alternativeName>
        <fullName evidence="2">30S ribosomal protein S2</fullName>
    </alternativeName>
</protein>
<reference key="1">
    <citation type="submission" date="2006-11" db="EMBL/GenBank/DDBJ databases">
        <title>Identification and characterization of a new conjugation/ type IVA secretion system (trb/tra) of L. pneumophila Corby localized on a mobile genomic island.</title>
        <authorList>
            <person name="Gloeckner G."/>
            <person name="Albert-Weissenberger C."/>
            <person name="Weinmann E."/>
            <person name="Jacobi S."/>
            <person name="Schunder E."/>
            <person name="Steinert M."/>
            <person name="Buchrieser C."/>
            <person name="Hacker J."/>
            <person name="Heuner K."/>
        </authorList>
    </citation>
    <scope>NUCLEOTIDE SEQUENCE [LARGE SCALE GENOMIC DNA]</scope>
    <source>
        <strain>Corby</strain>
    </source>
</reference>
<feature type="chain" id="PRO_1000003990" description="Small ribosomal subunit protein uS2">
    <location>
        <begin position="1"/>
        <end position="254"/>
    </location>
</feature>
<sequence length="254" mass="28750">MNNVSMRELLEAGAHFGHRTRFWNPKMSEYIFGSRNKIHIINLEKTLPMLNDVTNYVSRLAANKAKILFVGTKRAAQDSIREHAKRCGMPYVDHRWLGGMLTNYKTVRQSIFRLKELKEMKEKGLFNDMIKKEALMLTRELEKLERSLGGIENMGGLPDALFVVDVGFEHIAVEEARRLRIPVIGVVDTNNSPDNIDYVIPGNDDSMRAVDIYVRCVADAILDGKNSNTVGRVSSDSEFVEVTSNSNEEEKSGE</sequence>
<comment type="similarity">
    <text evidence="1">Belongs to the universal ribosomal protein uS2 family.</text>
</comment>
<proteinExistence type="inferred from homology"/>